<keyword id="KW-0012">Acyltransferase</keyword>
<keyword id="KW-0134">Cell wall</keyword>
<keyword id="KW-0963">Cytoplasm</keyword>
<keyword id="KW-0964">Secreted</keyword>
<keyword id="KW-0808">Transferase</keyword>
<gene>
    <name type="primary">fbpA</name>
</gene>
<comment type="function">
    <text evidence="1">The antigen 85 proteins (FbpA, FbpB, FbpC) are responsible for the high affinity of mycobacteria for fibronectin, a large adhesive glycoprotein, which facilitates the attachment of M.tuberculosis to murine alveolar macrophages (AMs). They also help to maintain the integrity of the cell wall by catalyzing the transfer of mycolic acids to cell wall arabinogalactan, and through the synthesis of alpha,alpha-trehalose dimycolate (TDM, cord factor). They catalyze the transfer of a mycoloyl residue from one molecule of alpha,alpha-trehalose monomycolate (TMM) to another TMM, leading to the formation of TDM. FbpA mediates triacylglycerol (TAG) formation with long-chain acyl-CoA as the acyl donor and 1,2-dipalmitoyl-sn-glycerol (1,2-dipalmitin) as the acyl acceptor. It has a preference for C26:0-CoA over C18:1-CoA (By similarity).</text>
</comment>
<comment type="catalytic activity">
    <reaction>
        <text>an acyl-CoA + a 1,2-diacyl-sn-glycerol = a triacyl-sn-glycerol + CoA</text>
        <dbReference type="Rhea" id="RHEA:10868"/>
        <dbReference type="ChEBI" id="CHEBI:17815"/>
        <dbReference type="ChEBI" id="CHEBI:57287"/>
        <dbReference type="ChEBI" id="CHEBI:58342"/>
        <dbReference type="ChEBI" id="CHEBI:64615"/>
        <dbReference type="EC" id="2.3.1.20"/>
    </reaction>
</comment>
<comment type="catalytic activity">
    <reaction>
        <text>2 alpha,alpha'-trehalose 6-mycolate = alpha,alpha'-trehalose 6,6'-bismycolate + alpha,alpha-trehalose</text>
        <dbReference type="Rhea" id="RHEA:23472"/>
        <dbReference type="ChEBI" id="CHEBI:16551"/>
        <dbReference type="ChEBI" id="CHEBI:18195"/>
        <dbReference type="ChEBI" id="CHEBI:18234"/>
        <dbReference type="EC" id="2.3.1.122"/>
    </reaction>
</comment>
<comment type="subunit">
    <text evidence="1">Homodimer.</text>
</comment>
<comment type="subcellular location">
    <subcellularLocation>
        <location>Secreted</location>
        <location>Cell wall</location>
    </subcellularLocation>
    <subcellularLocation>
        <location>Cytoplasm</location>
    </subcellularLocation>
</comment>
<comment type="similarity">
    <text evidence="2">Belongs to the mycobacterial A85 antigen family.</text>
</comment>
<reference key="1">
    <citation type="submission" date="2000-05" db="EMBL/GenBank/DDBJ databases">
        <title>Comparative genetic analysis of Mycobacterium ulcerans and Mycobacterium marinum reveals evidence of recent divergence.</title>
        <authorList>
            <person name="Stiear T.P."/>
            <person name="Jenkin G.A."/>
            <person name="Johnson P.D.R."/>
            <person name="Davies J.K."/>
        </authorList>
    </citation>
    <scope>NUCLEOTIDE SEQUENCE [GENOMIC DNA]</scope>
    <source>
        <strain>ATCC 927 / DSM 44344 / JCM 12275 / NCTC 2275 / TMC 1218</strain>
    </source>
</reference>
<evidence type="ECO:0000250" key="1"/>
<evidence type="ECO:0000305" key="2"/>
<dbReference type="EC" id="2.3.1.122"/>
<dbReference type="EC" id="2.3.1.20"/>
<dbReference type="EMBL" id="AF271345">
    <property type="protein sequence ID" value="AAF86326.1"/>
    <property type="molecule type" value="Genomic_DNA"/>
</dbReference>
<dbReference type="SMR" id="Q9KH57"/>
<dbReference type="ESTHER" id="mycul-a85a">
    <property type="family name" value="A85-Mycolyl-transferase"/>
</dbReference>
<dbReference type="GO" id="GO:0005737">
    <property type="term" value="C:cytoplasm"/>
    <property type="evidence" value="ECO:0007669"/>
    <property type="project" value="UniProtKB-SubCell"/>
</dbReference>
<dbReference type="GO" id="GO:0005576">
    <property type="term" value="C:extracellular region"/>
    <property type="evidence" value="ECO:0007669"/>
    <property type="project" value="UniProtKB-KW"/>
</dbReference>
<dbReference type="GO" id="GO:0004144">
    <property type="term" value="F:diacylglycerol O-acyltransferase activity"/>
    <property type="evidence" value="ECO:0007669"/>
    <property type="project" value="UniProtKB-EC"/>
</dbReference>
<dbReference type="GO" id="GO:0050348">
    <property type="term" value="F:trehalose O-mycolyltransferase activity"/>
    <property type="evidence" value="ECO:0007669"/>
    <property type="project" value="UniProtKB-EC"/>
</dbReference>
<dbReference type="Gene3D" id="3.40.50.1820">
    <property type="entry name" value="alpha/beta hydrolase"/>
    <property type="match status" value="1"/>
</dbReference>
<dbReference type="InterPro" id="IPR029058">
    <property type="entry name" value="AB_hydrolase_fold"/>
</dbReference>
<dbReference type="InterPro" id="IPR000801">
    <property type="entry name" value="Esterase-like"/>
</dbReference>
<dbReference type="Pfam" id="PF00756">
    <property type="entry name" value="Esterase"/>
    <property type="match status" value="1"/>
</dbReference>
<dbReference type="SUPFAM" id="SSF53474">
    <property type="entry name" value="alpha/beta-Hydrolases"/>
    <property type="match status" value="1"/>
</dbReference>
<feature type="chain" id="PRO_0000093796" description="Diacylglycerol acyltransferase/mycolyltransferase Ag85A">
    <location>
        <begin position="1" status="less than"/>
        <end position="139" status="greater than"/>
    </location>
</feature>
<feature type="active site" description="Nucleophile" evidence="1">
    <location>
        <position position="10"/>
    </location>
</feature>
<feature type="active site" evidence="1">
    <location>
        <position position="114"/>
    </location>
</feature>
<feature type="binding site" evidence="1">
    <location>
        <position position="10"/>
    </location>
    <ligand>
        <name>substrate</name>
    </ligand>
</feature>
<feature type="binding site" evidence="1">
    <location>
        <position position="38"/>
    </location>
    <ligand>
        <name>substrate</name>
    </ligand>
</feature>
<feature type="binding site" evidence="1">
    <location>
        <begin position="116"/>
        <end position="119"/>
    </location>
    <ligand>
        <name>substrate</name>
    </ligand>
</feature>
<feature type="binding site" evidence="1">
    <location>
        <position position="123"/>
    </location>
    <ligand>
        <name>substrate</name>
    </ligand>
</feature>
<feature type="non-terminal residue">
    <location>
        <position position="1"/>
    </location>
</feature>
<feature type="non-terminal residue">
    <location>
        <position position="139"/>
    </location>
</feature>
<name>A85A_MYCMR</name>
<accession>Q9KH57</accession>
<organism>
    <name type="scientific">Mycobacterium marinum</name>
    <dbReference type="NCBI Taxonomy" id="1781"/>
    <lineage>
        <taxon>Bacteria</taxon>
        <taxon>Bacillati</taxon>
        <taxon>Actinomycetota</taxon>
        <taxon>Actinomycetes</taxon>
        <taxon>Mycobacteriales</taxon>
        <taxon>Mycobacteriaceae</taxon>
        <taxon>Mycobacterium</taxon>
        <taxon>Mycobacterium ulcerans group</taxon>
    </lineage>
</organism>
<proteinExistence type="inferred from homology"/>
<protein>
    <recommendedName>
        <fullName>Diacylglycerol acyltransferase/mycolyltransferase Ag85A</fullName>
        <shortName>DGAT</shortName>
        <ecNumber>2.3.1.122</ecNumber>
        <ecNumber>2.3.1.20</ecNumber>
    </recommendedName>
    <alternativeName>
        <fullName>Acyl-CoA:diacylglycerol acyltransferase</fullName>
    </alternativeName>
    <alternativeName>
        <fullName>Antigen 85 complex A</fullName>
        <shortName>85A</shortName>
        <shortName>Ag85A</shortName>
    </alternativeName>
    <alternativeName>
        <fullName>Fibronectin-binding protein A</fullName>
        <shortName>Fbps A</shortName>
    </alternativeName>
</protein>
<sequence>PTGSGVVGLSMAGSSALILAAYHPDQFVYSGSLSALLDPSQGMGPSLIGLAMGDAGGYKASDMWGPKDDPAWARNDPMLQVGKLVANNTRIWVYCGNGKPSDLGGDNLPAKFLEGFVRTSNMKFQAAYNAAGGHNAVWN</sequence>